<dbReference type="EMBL" id="CR848038">
    <property type="protein sequence ID" value="CAH63566.1"/>
    <property type="molecule type" value="Genomic_DNA"/>
</dbReference>
<dbReference type="RefSeq" id="WP_006342784.1">
    <property type="nucleotide sequence ID" value="NC_004552.2"/>
</dbReference>
<dbReference type="SMR" id="Q5L704"/>
<dbReference type="GeneID" id="93024655"/>
<dbReference type="KEGG" id="cab:CAB108"/>
<dbReference type="eggNOG" id="COG0098">
    <property type="taxonomic scope" value="Bacteria"/>
</dbReference>
<dbReference type="HOGENOM" id="CLU_065898_2_2_0"/>
<dbReference type="OrthoDB" id="9809045at2"/>
<dbReference type="Proteomes" id="UP000001012">
    <property type="component" value="Chromosome"/>
</dbReference>
<dbReference type="GO" id="GO:0015935">
    <property type="term" value="C:small ribosomal subunit"/>
    <property type="evidence" value="ECO:0007669"/>
    <property type="project" value="InterPro"/>
</dbReference>
<dbReference type="GO" id="GO:0019843">
    <property type="term" value="F:rRNA binding"/>
    <property type="evidence" value="ECO:0007669"/>
    <property type="project" value="UniProtKB-UniRule"/>
</dbReference>
<dbReference type="GO" id="GO:0003735">
    <property type="term" value="F:structural constituent of ribosome"/>
    <property type="evidence" value="ECO:0007669"/>
    <property type="project" value="InterPro"/>
</dbReference>
<dbReference type="GO" id="GO:0006412">
    <property type="term" value="P:translation"/>
    <property type="evidence" value="ECO:0007669"/>
    <property type="project" value="UniProtKB-UniRule"/>
</dbReference>
<dbReference type="FunFam" id="3.30.160.20:FF:000066">
    <property type="entry name" value="30S ribosomal protein S5"/>
    <property type="match status" value="1"/>
</dbReference>
<dbReference type="FunFam" id="3.30.230.10:FF:000002">
    <property type="entry name" value="30S ribosomal protein S5"/>
    <property type="match status" value="1"/>
</dbReference>
<dbReference type="Gene3D" id="3.30.160.20">
    <property type="match status" value="1"/>
</dbReference>
<dbReference type="Gene3D" id="3.30.230.10">
    <property type="match status" value="1"/>
</dbReference>
<dbReference type="HAMAP" id="MF_01307_B">
    <property type="entry name" value="Ribosomal_uS5_B"/>
    <property type="match status" value="1"/>
</dbReference>
<dbReference type="InterPro" id="IPR020568">
    <property type="entry name" value="Ribosomal_Su5_D2-typ_SF"/>
</dbReference>
<dbReference type="InterPro" id="IPR000851">
    <property type="entry name" value="Ribosomal_uS5"/>
</dbReference>
<dbReference type="InterPro" id="IPR005712">
    <property type="entry name" value="Ribosomal_uS5_bac-type"/>
</dbReference>
<dbReference type="InterPro" id="IPR005324">
    <property type="entry name" value="Ribosomal_uS5_C"/>
</dbReference>
<dbReference type="InterPro" id="IPR013810">
    <property type="entry name" value="Ribosomal_uS5_N"/>
</dbReference>
<dbReference type="InterPro" id="IPR018192">
    <property type="entry name" value="Ribosomal_uS5_N_CS"/>
</dbReference>
<dbReference type="InterPro" id="IPR014721">
    <property type="entry name" value="Ribsml_uS5_D2-typ_fold_subgr"/>
</dbReference>
<dbReference type="NCBIfam" id="TIGR01021">
    <property type="entry name" value="rpsE_bact"/>
    <property type="match status" value="1"/>
</dbReference>
<dbReference type="PANTHER" id="PTHR48277">
    <property type="entry name" value="MITOCHONDRIAL RIBOSOMAL PROTEIN S5"/>
    <property type="match status" value="1"/>
</dbReference>
<dbReference type="PANTHER" id="PTHR48277:SF1">
    <property type="entry name" value="MITOCHONDRIAL RIBOSOMAL PROTEIN S5"/>
    <property type="match status" value="1"/>
</dbReference>
<dbReference type="Pfam" id="PF00333">
    <property type="entry name" value="Ribosomal_S5"/>
    <property type="match status" value="1"/>
</dbReference>
<dbReference type="Pfam" id="PF03719">
    <property type="entry name" value="Ribosomal_S5_C"/>
    <property type="match status" value="1"/>
</dbReference>
<dbReference type="SUPFAM" id="SSF54768">
    <property type="entry name" value="dsRNA-binding domain-like"/>
    <property type="match status" value="1"/>
</dbReference>
<dbReference type="SUPFAM" id="SSF54211">
    <property type="entry name" value="Ribosomal protein S5 domain 2-like"/>
    <property type="match status" value="1"/>
</dbReference>
<dbReference type="PROSITE" id="PS00585">
    <property type="entry name" value="RIBOSOMAL_S5"/>
    <property type="match status" value="1"/>
</dbReference>
<dbReference type="PROSITE" id="PS50881">
    <property type="entry name" value="S5_DSRBD"/>
    <property type="match status" value="1"/>
</dbReference>
<protein>
    <recommendedName>
        <fullName evidence="1">Small ribosomal subunit protein uS5</fullName>
    </recommendedName>
    <alternativeName>
        <fullName evidence="2">30S ribosomal protein S5</fullName>
    </alternativeName>
</protein>
<keyword id="KW-0687">Ribonucleoprotein</keyword>
<keyword id="KW-0689">Ribosomal protein</keyword>
<keyword id="KW-0694">RNA-binding</keyword>
<keyword id="KW-0699">rRNA-binding</keyword>
<comment type="function">
    <text evidence="1">With S4 and S12 plays an important role in translational accuracy.</text>
</comment>
<comment type="function">
    <text evidence="1">Located at the back of the 30S subunit body where it stabilizes the conformation of the head with respect to the body.</text>
</comment>
<comment type="subunit">
    <text evidence="1">Part of the 30S ribosomal subunit. Contacts proteins S4 and S8.</text>
</comment>
<comment type="domain">
    <text>The N-terminal domain interacts with the head of the 30S subunit; the C-terminal domain interacts with the body and contacts protein S4. The interaction surface between S4 and S5 is involved in control of translational fidelity.</text>
</comment>
<comment type="similarity">
    <text evidence="1">Belongs to the universal ribosomal protein uS5 family.</text>
</comment>
<gene>
    <name evidence="1" type="primary">rpsE</name>
    <name type="ordered locus">CAB108</name>
</gene>
<feature type="chain" id="PRO_0000131495" description="Small ribosomal subunit protein uS5">
    <location>
        <begin position="1"/>
        <end position="165"/>
    </location>
</feature>
<feature type="domain" description="S5 DRBM" evidence="1">
    <location>
        <begin position="13"/>
        <end position="76"/>
    </location>
</feature>
<sequence length="165" mass="17760">MTLSKNSHKEDQLEEKVLVVNRCSKVVKGGRKFSFSALILVGDGKGRLGYGFAKANELTDAIRKGGEAARKNLITIESLEGDSIPHEVLVDQDGAQLLLKPAKPGTGIVAGSRIRLILEMAGVKNIVAKSLGSNNPMNQVKAAFKALLSLSSRKDVLTRRKVTHD</sequence>
<reference key="1">
    <citation type="journal article" date="2005" name="Genome Res.">
        <title>The Chlamydophila abortus genome sequence reveals an array of variable proteins that contribute to interspecies variation.</title>
        <authorList>
            <person name="Thomson N.R."/>
            <person name="Yeats C."/>
            <person name="Bell K."/>
            <person name="Holden M.T.G."/>
            <person name="Bentley S.D."/>
            <person name="Livingstone M."/>
            <person name="Cerdeno-Tarraga A.-M."/>
            <person name="Harris B."/>
            <person name="Doggett J."/>
            <person name="Ormond D."/>
            <person name="Mungall K."/>
            <person name="Clarke K."/>
            <person name="Feltwell T."/>
            <person name="Hance Z."/>
            <person name="Sanders M."/>
            <person name="Quail M.A."/>
            <person name="Price C."/>
            <person name="Barrell B.G."/>
            <person name="Parkhill J."/>
            <person name="Longbottom D."/>
        </authorList>
    </citation>
    <scope>NUCLEOTIDE SEQUENCE [LARGE SCALE GENOMIC DNA]</scope>
    <source>
        <strain>DSM 27085 / S26/3</strain>
    </source>
</reference>
<organism>
    <name type="scientific">Chlamydia abortus (strain DSM 27085 / S26/3)</name>
    <name type="common">Chlamydophila abortus</name>
    <dbReference type="NCBI Taxonomy" id="218497"/>
    <lineage>
        <taxon>Bacteria</taxon>
        <taxon>Pseudomonadati</taxon>
        <taxon>Chlamydiota</taxon>
        <taxon>Chlamydiia</taxon>
        <taxon>Chlamydiales</taxon>
        <taxon>Chlamydiaceae</taxon>
        <taxon>Chlamydia/Chlamydophila group</taxon>
        <taxon>Chlamydia</taxon>
    </lineage>
</organism>
<name>RS5_CHLAB</name>
<accession>Q5L704</accession>
<proteinExistence type="inferred from homology"/>
<evidence type="ECO:0000255" key="1">
    <source>
        <dbReference type="HAMAP-Rule" id="MF_01307"/>
    </source>
</evidence>
<evidence type="ECO:0000305" key="2"/>